<feature type="chain" id="PRO_1000014543" description="Small ribosomal subunit protein bS20">
    <location>
        <begin position="1"/>
        <end position="88"/>
    </location>
</feature>
<feature type="region of interest" description="Disordered" evidence="2">
    <location>
        <begin position="1"/>
        <end position="27"/>
    </location>
</feature>
<feature type="compositionally biased region" description="Basic residues" evidence="2">
    <location>
        <begin position="7"/>
        <end position="22"/>
    </location>
</feature>
<dbReference type="EMBL" id="CP000453">
    <property type="protein sequence ID" value="ABI56203.1"/>
    <property type="molecule type" value="Genomic_DNA"/>
</dbReference>
<dbReference type="RefSeq" id="WP_011628598.1">
    <property type="nucleotide sequence ID" value="NC_008340.1"/>
</dbReference>
<dbReference type="SMR" id="Q0AAD4"/>
<dbReference type="KEGG" id="aeh:Mlg_0849"/>
<dbReference type="eggNOG" id="COG0268">
    <property type="taxonomic scope" value="Bacteria"/>
</dbReference>
<dbReference type="HOGENOM" id="CLU_160655_4_0_6"/>
<dbReference type="OrthoDB" id="9807974at2"/>
<dbReference type="Proteomes" id="UP000001962">
    <property type="component" value="Chromosome"/>
</dbReference>
<dbReference type="GO" id="GO:0005829">
    <property type="term" value="C:cytosol"/>
    <property type="evidence" value="ECO:0007669"/>
    <property type="project" value="TreeGrafter"/>
</dbReference>
<dbReference type="GO" id="GO:0015935">
    <property type="term" value="C:small ribosomal subunit"/>
    <property type="evidence" value="ECO:0007669"/>
    <property type="project" value="TreeGrafter"/>
</dbReference>
<dbReference type="GO" id="GO:0070181">
    <property type="term" value="F:small ribosomal subunit rRNA binding"/>
    <property type="evidence" value="ECO:0007669"/>
    <property type="project" value="TreeGrafter"/>
</dbReference>
<dbReference type="GO" id="GO:0003735">
    <property type="term" value="F:structural constituent of ribosome"/>
    <property type="evidence" value="ECO:0007669"/>
    <property type="project" value="InterPro"/>
</dbReference>
<dbReference type="GO" id="GO:0006412">
    <property type="term" value="P:translation"/>
    <property type="evidence" value="ECO:0007669"/>
    <property type="project" value="UniProtKB-UniRule"/>
</dbReference>
<dbReference type="FunFam" id="1.20.58.110:FF:000001">
    <property type="entry name" value="30S ribosomal protein S20"/>
    <property type="match status" value="1"/>
</dbReference>
<dbReference type="Gene3D" id="1.20.58.110">
    <property type="entry name" value="Ribosomal protein S20"/>
    <property type="match status" value="1"/>
</dbReference>
<dbReference type="HAMAP" id="MF_00500">
    <property type="entry name" value="Ribosomal_bS20"/>
    <property type="match status" value="1"/>
</dbReference>
<dbReference type="InterPro" id="IPR002583">
    <property type="entry name" value="Ribosomal_bS20"/>
</dbReference>
<dbReference type="InterPro" id="IPR036510">
    <property type="entry name" value="Ribosomal_bS20_sf"/>
</dbReference>
<dbReference type="NCBIfam" id="TIGR00029">
    <property type="entry name" value="S20"/>
    <property type="match status" value="1"/>
</dbReference>
<dbReference type="PANTHER" id="PTHR33398">
    <property type="entry name" value="30S RIBOSOMAL PROTEIN S20"/>
    <property type="match status" value="1"/>
</dbReference>
<dbReference type="PANTHER" id="PTHR33398:SF1">
    <property type="entry name" value="SMALL RIBOSOMAL SUBUNIT PROTEIN BS20C"/>
    <property type="match status" value="1"/>
</dbReference>
<dbReference type="Pfam" id="PF01649">
    <property type="entry name" value="Ribosomal_S20p"/>
    <property type="match status" value="1"/>
</dbReference>
<dbReference type="SUPFAM" id="SSF46992">
    <property type="entry name" value="Ribosomal protein S20"/>
    <property type="match status" value="1"/>
</dbReference>
<accession>Q0AAD4</accession>
<comment type="function">
    <text evidence="1">Binds directly to 16S ribosomal RNA.</text>
</comment>
<comment type="similarity">
    <text evidence="1">Belongs to the bacterial ribosomal protein bS20 family.</text>
</comment>
<gene>
    <name evidence="1" type="primary">rpsT</name>
    <name type="ordered locus">Mlg_0849</name>
</gene>
<keyword id="KW-1185">Reference proteome</keyword>
<keyword id="KW-0687">Ribonucleoprotein</keyword>
<keyword id="KW-0689">Ribosomal protein</keyword>
<keyword id="KW-0694">RNA-binding</keyword>
<keyword id="KW-0699">rRNA-binding</keyword>
<proteinExistence type="inferred from homology"/>
<protein>
    <recommendedName>
        <fullName evidence="1">Small ribosomal subunit protein bS20</fullName>
    </recommendedName>
    <alternativeName>
        <fullName evidence="3">30S ribosomal protein S20</fullName>
    </alternativeName>
</protein>
<sequence length="88" mass="10127">MANIPSAKKRARQAEKRRKHNQSQRSMMRTYIKRVVNAIKAGDKAQAEEAYKVAVPVIDRMATRGLIHKNKAARHKSRLNQHLRNLQG</sequence>
<evidence type="ECO:0000255" key="1">
    <source>
        <dbReference type="HAMAP-Rule" id="MF_00500"/>
    </source>
</evidence>
<evidence type="ECO:0000256" key="2">
    <source>
        <dbReference type="SAM" id="MobiDB-lite"/>
    </source>
</evidence>
<evidence type="ECO:0000305" key="3"/>
<name>RS20_ALKEH</name>
<organism>
    <name type="scientific">Alkalilimnicola ehrlichii (strain ATCC BAA-1101 / DSM 17681 / MLHE-1)</name>
    <dbReference type="NCBI Taxonomy" id="187272"/>
    <lineage>
        <taxon>Bacteria</taxon>
        <taxon>Pseudomonadati</taxon>
        <taxon>Pseudomonadota</taxon>
        <taxon>Gammaproteobacteria</taxon>
        <taxon>Chromatiales</taxon>
        <taxon>Ectothiorhodospiraceae</taxon>
        <taxon>Alkalilimnicola</taxon>
    </lineage>
</organism>
<reference key="1">
    <citation type="submission" date="2006-08" db="EMBL/GenBank/DDBJ databases">
        <title>Complete sequence of Alkalilimnicola ehrilichei MLHE-1.</title>
        <authorList>
            <person name="Copeland A."/>
            <person name="Lucas S."/>
            <person name="Lapidus A."/>
            <person name="Barry K."/>
            <person name="Detter J.C."/>
            <person name="Glavina del Rio T."/>
            <person name="Hammon N."/>
            <person name="Israni S."/>
            <person name="Dalin E."/>
            <person name="Tice H."/>
            <person name="Pitluck S."/>
            <person name="Sims D."/>
            <person name="Brettin T."/>
            <person name="Bruce D."/>
            <person name="Han C."/>
            <person name="Tapia R."/>
            <person name="Gilna P."/>
            <person name="Schmutz J."/>
            <person name="Larimer F."/>
            <person name="Land M."/>
            <person name="Hauser L."/>
            <person name="Kyrpides N."/>
            <person name="Mikhailova N."/>
            <person name="Oremland R.S."/>
            <person name="Hoeft S.E."/>
            <person name="Switzer-Blum J."/>
            <person name="Kulp T."/>
            <person name="King G."/>
            <person name="Tabita R."/>
            <person name="Witte B."/>
            <person name="Santini J.M."/>
            <person name="Basu P."/>
            <person name="Hollibaugh J.T."/>
            <person name="Xie G."/>
            <person name="Stolz J.F."/>
            <person name="Richardson P."/>
        </authorList>
    </citation>
    <scope>NUCLEOTIDE SEQUENCE [LARGE SCALE GENOMIC DNA]</scope>
    <source>
        <strain>ATCC BAA-1101 / DSM 17681 / MLHE-1</strain>
    </source>
</reference>